<gene>
    <name evidence="1" type="primary">rplT</name>
    <name type="ordered locus">BAV2068</name>
</gene>
<proteinExistence type="inferred from homology"/>
<sequence length="119" mass="13280">MPRVKRGVTARARHKKVIAAAKGYRGRRGNVFRIAKQAVMRAGQYAYRDRRNKKRTFRALWITRINAAVREQGLSYSVFIAGLKKAAIELDRKVLADLAVRDKAGFAAIVQQAKAALAA</sequence>
<accession>Q2KZL8</accession>
<protein>
    <recommendedName>
        <fullName evidence="1">Large ribosomal subunit protein bL20</fullName>
    </recommendedName>
    <alternativeName>
        <fullName evidence="2">50S ribosomal protein L20</fullName>
    </alternativeName>
</protein>
<dbReference type="EMBL" id="AM167904">
    <property type="protein sequence ID" value="CAJ49678.1"/>
    <property type="molecule type" value="Genomic_DNA"/>
</dbReference>
<dbReference type="RefSeq" id="WP_012417735.1">
    <property type="nucleotide sequence ID" value="NC_010645.1"/>
</dbReference>
<dbReference type="SMR" id="Q2KZL8"/>
<dbReference type="STRING" id="360910.BAV2068"/>
<dbReference type="GeneID" id="92994223"/>
<dbReference type="KEGG" id="bav:BAV2068"/>
<dbReference type="eggNOG" id="COG0292">
    <property type="taxonomic scope" value="Bacteria"/>
</dbReference>
<dbReference type="HOGENOM" id="CLU_123265_0_1_4"/>
<dbReference type="OrthoDB" id="9808966at2"/>
<dbReference type="Proteomes" id="UP000001977">
    <property type="component" value="Chromosome"/>
</dbReference>
<dbReference type="GO" id="GO:1990904">
    <property type="term" value="C:ribonucleoprotein complex"/>
    <property type="evidence" value="ECO:0007669"/>
    <property type="project" value="UniProtKB-KW"/>
</dbReference>
<dbReference type="GO" id="GO:0005840">
    <property type="term" value="C:ribosome"/>
    <property type="evidence" value="ECO:0007669"/>
    <property type="project" value="UniProtKB-KW"/>
</dbReference>
<dbReference type="GO" id="GO:0019843">
    <property type="term" value="F:rRNA binding"/>
    <property type="evidence" value="ECO:0007669"/>
    <property type="project" value="UniProtKB-UniRule"/>
</dbReference>
<dbReference type="GO" id="GO:0003735">
    <property type="term" value="F:structural constituent of ribosome"/>
    <property type="evidence" value="ECO:0007669"/>
    <property type="project" value="InterPro"/>
</dbReference>
<dbReference type="GO" id="GO:0000027">
    <property type="term" value="P:ribosomal large subunit assembly"/>
    <property type="evidence" value="ECO:0007669"/>
    <property type="project" value="UniProtKB-UniRule"/>
</dbReference>
<dbReference type="GO" id="GO:0006412">
    <property type="term" value="P:translation"/>
    <property type="evidence" value="ECO:0007669"/>
    <property type="project" value="InterPro"/>
</dbReference>
<dbReference type="CDD" id="cd07026">
    <property type="entry name" value="Ribosomal_L20"/>
    <property type="match status" value="1"/>
</dbReference>
<dbReference type="FunFam" id="1.10.1900.20:FF:000001">
    <property type="entry name" value="50S ribosomal protein L20"/>
    <property type="match status" value="1"/>
</dbReference>
<dbReference type="Gene3D" id="6.10.160.10">
    <property type="match status" value="1"/>
</dbReference>
<dbReference type="Gene3D" id="1.10.1900.20">
    <property type="entry name" value="Ribosomal protein L20"/>
    <property type="match status" value="1"/>
</dbReference>
<dbReference type="HAMAP" id="MF_00382">
    <property type="entry name" value="Ribosomal_bL20"/>
    <property type="match status" value="1"/>
</dbReference>
<dbReference type="InterPro" id="IPR005813">
    <property type="entry name" value="Ribosomal_bL20"/>
</dbReference>
<dbReference type="InterPro" id="IPR049946">
    <property type="entry name" value="RIBOSOMAL_L20_CS"/>
</dbReference>
<dbReference type="InterPro" id="IPR035566">
    <property type="entry name" value="Ribosomal_protein_bL20_C"/>
</dbReference>
<dbReference type="NCBIfam" id="TIGR01032">
    <property type="entry name" value="rplT_bact"/>
    <property type="match status" value="1"/>
</dbReference>
<dbReference type="PANTHER" id="PTHR10986">
    <property type="entry name" value="39S RIBOSOMAL PROTEIN L20"/>
    <property type="match status" value="1"/>
</dbReference>
<dbReference type="Pfam" id="PF00453">
    <property type="entry name" value="Ribosomal_L20"/>
    <property type="match status" value="1"/>
</dbReference>
<dbReference type="PRINTS" id="PR00062">
    <property type="entry name" value="RIBOSOMALL20"/>
</dbReference>
<dbReference type="SUPFAM" id="SSF74731">
    <property type="entry name" value="Ribosomal protein L20"/>
    <property type="match status" value="1"/>
</dbReference>
<dbReference type="PROSITE" id="PS00937">
    <property type="entry name" value="RIBOSOMAL_L20"/>
    <property type="match status" value="1"/>
</dbReference>
<name>RL20_BORA1</name>
<reference key="1">
    <citation type="journal article" date="2006" name="J. Bacteriol.">
        <title>Comparison of the genome sequence of the poultry pathogen Bordetella avium with those of B. bronchiseptica, B. pertussis, and B. parapertussis reveals extensive diversity in surface structures associated with host interaction.</title>
        <authorList>
            <person name="Sebaihia M."/>
            <person name="Preston A."/>
            <person name="Maskell D.J."/>
            <person name="Kuzmiak H."/>
            <person name="Connell T.D."/>
            <person name="King N.D."/>
            <person name="Orndorff P.E."/>
            <person name="Miyamoto D.M."/>
            <person name="Thomson N.R."/>
            <person name="Harris D."/>
            <person name="Goble A."/>
            <person name="Lord A."/>
            <person name="Murphy L."/>
            <person name="Quail M.A."/>
            <person name="Rutter S."/>
            <person name="Squares R."/>
            <person name="Squares S."/>
            <person name="Woodward J."/>
            <person name="Parkhill J."/>
            <person name="Temple L.M."/>
        </authorList>
    </citation>
    <scope>NUCLEOTIDE SEQUENCE [LARGE SCALE GENOMIC DNA]</scope>
    <source>
        <strain>197N</strain>
    </source>
</reference>
<comment type="function">
    <text evidence="1">Binds directly to 23S ribosomal RNA and is necessary for the in vitro assembly process of the 50S ribosomal subunit. It is not involved in the protein synthesizing functions of that subunit.</text>
</comment>
<comment type="similarity">
    <text evidence="1">Belongs to the bacterial ribosomal protein bL20 family.</text>
</comment>
<keyword id="KW-1185">Reference proteome</keyword>
<keyword id="KW-0687">Ribonucleoprotein</keyword>
<keyword id="KW-0689">Ribosomal protein</keyword>
<keyword id="KW-0694">RNA-binding</keyword>
<keyword id="KW-0699">rRNA-binding</keyword>
<feature type="chain" id="PRO_0000243660" description="Large ribosomal subunit protein bL20">
    <location>
        <begin position="1"/>
        <end position="119"/>
    </location>
</feature>
<organism>
    <name type="scientific">Bordetella avium (strain 197N)</name>
    <dbReference type="NCBI Taxonomy" id="360910"/>
    <lineage>
        <taxon>Bacteria</taxon>
        <taxon>Pseudomonadati</taxon>
        <taxon>Pseudomonadota</taxon>
        <taxon>Betaproteobacteria</taxon>
        <taxon>Burkholderiales</taxon>
        <taxon>Alcaligenaceae</taxon>
        <taxon>Bordetella</taxon>
    </lineage>
</organism>
<evidence type="ECO:0000255" key="1">
    <source>
        <dbReference type="HAMAP-Rule" id="MF_00382"/>
    </source>
</evidence>
<evidence type="ECO:0000305" key="2"/>